<proteinExistence type="inferred from homology"/>
<sequence>MELIFLSIALAMDSVAISMANGARCMNIKALQIFKMSFLFGIFQAFMPVIGYFLGLAFVGFISYIDHYVAFAILLFLGIKMIKESRQISVHCSLNLSLRMLMLGAFATSLDALAVGITFSFEEINIAIAAFVIGLVCFVLCVIASYMGRVLGEMLESKALVLGGVILILIGCKIIITHLIN</sequence>
<organism>
    <name type="scientific">Campylobacter fetus subsp. fetus (strain 82-40)</name>
    <dbReference type="NCBI Taxonomy" id="360106"/>
    <lineage>
        <taxon>Bacteria</taxon>
        <taxon>Pseudomonadati</taxon>
        <taxon>Campylobacterota</taxon>
        <taxon>Epsilonproteobacteria</taxon>
        <taxon>Campylobacterales</taxon>
        <taxon>Campylobacteraceae</taxon>
        <taxon>Campylobacter</taxon>
    </lineage>
</organism>
<protein>
    <recommendedName>
        <fullName evidence="1">Putative manganese efflux pump MntP</fullName>
    </recommendedName>
</protein>
<evidence type="ECO:0000255" key="1">
    <source>
        <dbReference type="HAMAP-Rule" id="MF_01521"/>
    </source>
</evidence>
<gene>
    <name evidence="1" type="primary">mntP</name>
    <name type="ordered locus">CFF8240_1725</name>
</gene>
<accession>A0RRL1</accession>
<reference key="1">
    <citation type="submission" date="2006-11" db="EMBL/GenBank/DDBJ databases">
        <title>Sequence of Campylobacter fetus subsp. fetus 82-40.</title>
        <authorList>
            <person name="Fouts D.E."/>
            <person name="Nelson K.E."/>
        </authorList>
    </citation>
    <scope>NUCLEOTIDE SEQUENCE [LARGE SCALE GENOMIC DNA]</scope>
    <source>
        <strain>82-40</strain>
    </source>
</reference>
<keyword id="KW-0997">Cell inner membrane</keyword>
<keyword id="KW-1003">Cell membrane</keyword>
<keyword id="KW-0406">Ion transport</keyword>
<keyword id="KW-0464">Manganese</keyword>
<keyword id="KW-0472">Membrane</keyword>
<keyword id="KW-0812">Transmembrane</keyword>
<keyword id="KW-1133">Transmembrane helix</keyword>
<keyword id="KW-0813">Transport</keyword>
<dbReference type="EMBL" id="CP000487">
    <property type="protein sequence ID" value="ABK83235.1"/>
    <property type="molecule type" value="Genomic_DNA"/>
</dbReference>
<dbReference type="RefSeq" id="WP_011732322.1">
    <property type="nucleotide sequence ID" value="NC_008599.1"/>
</dbReference>
<dbReference type="KEGG" id="cff:CFF8240_1725"/>
<dbReference type="eggNOG" id="COG1971">
    <property type="taxonomic scope" value="Bacteria"/>
</dbReference>
<dbReference type="HOGENOM" id="CLU_096410_3_0_7"/>
<dbReference type="Proteomes" id="UP000000760">
    <property type="component" value="Chromosome"/>
</dbReference>
<dbReference type="GO" id="GO:0005886">
    <property type="term" value="C:plasma membrane"/>
    <property type="evidence" value="ECO:0007669"/>
    <property type="project" value="UniProtKB-SubCell"/>
</dbReference>
<dbReference type="GO" id="GO:0005384">
    <property type="term" value="F:manganese ion transmembrane transporter activity"/>
    <property type="evidence" value="ECO:0007669"/>
    <property type="project" value="UniProtKB-UniRule"/>
</dbReference>
<dbReference type="HAMAP" id="MF_01521">
    <property type="entry name" value="MntP_pump"/>
    <property type="match status" value="1"/>
</dbReference>
<dbReference type="InterPro" id="IPR003810">
    <property type="entry name" value="Mntp/YtaF"/>
</dbReference>
<dbReference type="InterPro" id="IPR022929">
    <property type="entry name" value="Put_MntP"/>
</dbReference>
<dbReference type="PANTHER" id="PTHR35529">
    <property type="entry name" value="MANGANESE EFFLUX PUMP MNTP-RELATED"/>
    <property type="match status" value="1"/>
</dbReference>
<dbReference type="PANTHER" id="PTHR35529:SF1">
    <property type="entry name" value="MANGANESE EFFLUX PUMP MNTP-RELATED"/>
    <property type="match status" value="1"/>
</dbReference>
<dbReference type="Pfam" id="PF02659">
    <property type="entry name" value="Mntp"/>
    <property type="match status" value="1"/>
</dbReference>
<name>MNTP_CAMFF</name>
<feature type="chain" id="PRO_0000292531" description="Putative manganese efflux pump MntP">
    <location>
        <begin position="1"/>
        <end position="181"/>
    </location>
</feature>
<feature type="transmembrane region" description="Helical" evidence="1">
    <location>
        <begin position="3"/>
        <end position="23"/>
    </location>
</feature>
<feature type="transmembrane region" description="Helical" evidence="1">
    <location>
        <begin position="42"/>
        <end position="62"/>
    </location>
</feature>
<feature type="transmembrane region" description="Helical" evidence="1">
    <location>
        <begin position="63"/>
        <end position="83"/>
    </location>
</feature>
<feature type="transmembrane region" description="Helical" evidence="1">
    <location>
        <begin position="101"/>
        <end position="121"/>
    </location>
</feature>
<feature type="transmembrane region" description="Helical" evidence="1">
    <location>
        <begin position="124"/>
        <end position="144"/>
    </location>
</feature>
<feature type="transmembrane region" description="Helical" evidence="1">
    <location>
        <begin position="160"/>
        <end position="180"/>
    </location>
</feature>
<comment type="function">
    <text evidence="1">Probably functions as a manganese efflux pump.</text>
</comment>
<comment type="subcellular location">
    <subcellularLocation>
        <location evidence="1">Cell inner membrane</location>
        <topology evidence="1">Multi-pass membrane protein</topology>
    </subcellularLocation>
</comment>
<comment type="similarity">
    <text evidence="1">Belongs to the MntP (TC 9.B.29) family.</text>
</comment>